<keyword id="KW-0963">Cytoplasm</keyword>
<keyword id="KW-0489">Methyltransferase</keyword>
<keyword id="KW-1185">Reference proteome</keyword>
<keyword id="KW-0698">rRNA processing</keyword>
<keyword id="KW-0949">S-adenosyl-L-methionine</keyword>
<keyword id="KW-0808">Transferase</keyword>
<accession>Q07WH7</accession>
<gene>
    <name evidence="1" type="primary">rsmH</name>
    <name type="synonym">mraW</name>
    <name type="ordered locus">Sfri_3812</name>
</gene>
<proteinExistence type="inferred from homology"/>
<protein>
    <recommendedName>
        <fullName evidence="1">Ribosomal RNA small subunit methyltransferase H</fullName>
        <ecNumber evidence="1">2.1.1.199</ecNumber>
    </recommendedName>
    <alternativeName>
        <fullName evidence="1">16S rRNA m(4)C1402 methyltransferase</fullName>
    </alternativeName>
    <alternativeName>
        <fullName evidence="1">rRNA (cytosine-N(4)-)-methyltransferase RsmH</fullName>
    </alternativeName>
</protein>
<reference key="1">
    <citation type="submission" date="2006-08" db="EMBL/GenBank/DDBJ databases">
        <title>Complete sequence of Shewanella frigidimarina NCIMB 400.</title>
        <authorList>
            <consortium name="US DOE Joint Genome Institute"/>
            <person name="Copeland A."/>
            <person name="Lucas S."/>
            <person name="Lapidus A."/>
            <person name="Barry K."/>
            <person name="Detter J.C."/>
            <person name="Glavina del Rio T."/>
            <person name="Hammon N."/>
            <person name="Israni S."/>
            <person name="Dalin E."/>
            <person name="Tice H."/>
            <person name="Pitluck S."/>
            <person name="Fredrickson J.K."/>
            <person name="Kolker E."/>
            <person name="McCuel L.A."/>
            <person name="DiChristina T."/>
            <person name="Nealson K.H."/>
            <person name="Newman D."/>
            <person name="Tiedje J.M."/>
            <person name="Zhou J."/>
            <person name="Romine M.F."/>
            <person name="Culley D.E."/>
            <person name="Serres M."/>
            <person name="Chertkov O."/>
            <person name="Brettin T."/>
            <person name="Bruce D."/>
            <person name="Han C."/>
            <person name="Tapia R."/>
            <person name="Gilna P."/>
            <person name="Schmutz J."/>
            <person name="Larimer F."/>
            <person name="Land M."/>
            <person name="Hauser L."/>
            <person name="Kyrpides N."/>
            <person name="Mikhailova N."/>
            <person name="Richardson P."/>
        </authorList>
    </citation>
    <scope>NUCLEOTIDE SEQUENCE [LARGE SCALE GENOMIC DNA]</scope>
    <source>
        <strain>NCIMB 400</strain>
    </source>
</reference>
<feature type="chain" id="PRO_0000387115" description="Ribosomal RNA small subunit methyltransferase H">
    <location>
        <begin position="1"/>
        <end position="313"/>
    </location>
</feature>
<feature type="binding site" evidence="1">
    <location>
        <begin position="35"/>
        <end position="37"/>
    </location>
    <ligand>
        <name>S-adenosyl-L-methionine</name>
        <dbReference type="ChEBI" id="CHEBI:59789"/>
    </ligand>
</feature>
<feature type="binding site" evidence="1">
    <location>
        <position position="55"/>
    </location>
    <ligand>
        <name>S-adenosyl-L-methionine</name>
        <dbReference type="ChEBI" id="CHEBI:59789"/>
    </ligand>
</feature>
<feature type="binding site" evidence="1">
    <location>
        <position position="80"/>
    </location>
    <ligand>
        <name>S-adenosyl-L-methionine</name>
        <dbReference type="ChEBI" id="CHEBI:59789"/>
    </ligand>
</feature>
<feature type="binding site" evidence="1">
    <location>
        <position position="102"/>
    </location>
    <ligand>
        <name>S-adenosyl-L-methionine</name>
        <dbReference type="ChEBI" id="CHEBI:59789"/>
    </ligand>
</feature>
<feature type="binding site" evidence="1">
    <location>
        <position position="109"/>
    </location>
    <ligand>
        <name>S-adenosyl-L-methionine</name>
        <dbReference type="ChEBI" id="CHEBI:59789"/>
    </ligand>
</feature>
<dbReference type="EC" id="2.1.1.199" evidence="1"/>
<dbReference type="EMBL" id="CP000447">
    <property type="protein sequence ID" value="ABI73637.1"/>
    <property type="molecule type" value="Genomic_DNA"/>
</dbReference>
<dbReference type="RefSeq" id="WP_011639222.1">
    <property type="nucleotide sequence ID" value="NC_008345.1"/>
</dbReference>
<dbReference type="SMR" id="Q07WH7"/>
<dbReference type="STRING" id="318167.Sfri_3812"/>
<dbReference type="GeneID" id="90571057"/>
<dbReference type="KEGG" id="sfr:Sfri_3812"/>
<dbReference type="eggNOG" id="COG0275">
    <property type="taxonomic scope" value="Bacteria"/>
</dbReference>
<dbReference type="HOGENOM" id="CLU_038422_2_0_6"/>
<dbReference type="OrthoDB" id="9806637at2"/>
<dbReference type="Proteomes" id="UP000000684">
    <property type="component" value="Chromosome"/>
</dbReference>
<dbReference type="GO" id="GO:0005737">
    <property type="term" value="C:cytoplasm"/>
    <property type="evidence" value="ECO:0007669"/>
    <property type="project" value="UniProtKB-SubCell"/>
</dbReference>
<dbReference type="GO" id="GO:0071424">
    <property type="term" value="F:rRNA (cytosine-N4-)-methyltransferase activity"/>
    <property type="evidence" value="ECO:0007669"/>
    <property type="project" value="UniProtKB-UniRule"/>
</dbReference>
<dbReference type="GO" id="GO:0070475">
    <property type="term" value="P:rRNA base methylation"/>
    <property type="evidence" value="ECO:0007669"/>
    <property type="project" value="UniProtKB-UniRule"/>
</dbReference>
<dbReference type="FunFam" id="1.10.150.170:FF:000001">
    <property type="entry name" value="Ribosomal RNA small subunit methyltransferase H"/>
    <property type="match status" value="1"/>
</dbReference>
<dbReference type="Gene3D" id="1.10.150.170">
    <property type="entry name" value="Putative methyltransferase TM0872, insert domain"/>
    <property type="match status" value="1"/>
</dbReference>
<dbReference type="Gene3D" id="3.40.50.150">
    <property type="entry name" value="Vaccinia Virus protein VP39"/>
    <property type="match status" value="1"/>
</dbReference>
<dbReference type="HAMAP" id="MF_01007">
    <property type="entry name" value="16SrRNA_methyltr_H"/>
    <property type="match status" value="1"/>
</dbReference>
<dbReference type="InterPro" id="IPR002903">
    <property type="entry name" value="RsmH"/>
</dbReference>
<dbReference type="InterPro" id="IPR023397">
    <property type="entry name" value="SAM-dep_MeTrfase_MraW_recog"/>
</dbReference>
<dbReference type="InterPro" id="IPR029063">
    <property type="entry name" value="SAM-dependent_MTases_sf"/>
</dbReference>
<dbReference type="NCBIfam" id="TIGR00006">
    <property type="entry name" value="16S rRNA (cytosine(1402)-N(4))-methyltransferase RsmH"/>
    <property type="match status" value="1"/>
</dbReference>
<dbReference type="PANTHER" id="PTHR11265:SF0">
    <property type="entry name" value="12S RRNA N4-METHYLCYTIDINE METHYLTRANSFERASE"/>
    <property type="match status" value="1"/>
</dbReference>
<dbReference type="PANTHER" id="PTHR11265">
    <property type="entry name" value="S-ADENOSYL-METHYLTRANSFERASE MRAW"/>
    <property type="match status" value="1"/>
</dbReference>
<dbReference type="Pfam" id="PF01795">
    <property type="entry name" value="Methyltransf_5"/>
    <property type="match status" value="1"/>
</dbReference>
<dbReference type="PIRSF" id="PIRSF004486">
    <property type="entry name" value="MraW"/>
    <property type="match status" value="1"/>
</dbReference>
<dbReference type="SUPFAM" id="SSF81799">
    <property type="entry name" value="Putative methyltransferase TM0872, insert domain"/>
    <property type="match status" value="1"/>
</dbReference>
<dbReference type="SUPFAM" id="SSF53335">
    <property type="entry name" value="S-adenosyl-L-methionine-dependent methyltransferases"/>
    <property type="match status" value="1"/>
</dbReference>
<comment type="function">
    <text evidence="1">Specifically methylates the N4 position of cytidine in position 1402 (C1402) of 16S rRNA.</text>
</comment>
<comment type="catalytic activity">
    <reaction evidence="1">
        <text>cytidine(1402) in 16S rRNA + S-adenosyl-L-methionine = N(4)-methylcytidine(1402) in 16S rRNA + S-adenosyl-L-homocysteine + H(+)</text>
        <dbReference type="Rhea" id="RHEA:42928"/>
        <dbReference type="Rhea" id="RHEA-COMP:10286"/>
        <dbReference type="Rhea" id="RHEA-COMP:10287"/>
        <dbReference type="ChEBI" id="CHEBI:15378"/>
        <dbReference type="ChEBI" id="CHEBI:57856"/>
        <dbReference type="ChEBI" id="CHEBI:59789"/>
        <dbReference type="ChEBI" id="CHEBI:74506"/>
        <dbReference type="ChEBI" id="CHEBI:82748"/>
        <dbReference type="EC" id="2.1.1.199"/>
    </reaction>
</comment>
<comment type="subcellular location">
    <subcellularLocation>
        <location evidence="1">Cytoplasm</location>
    </subcellularLocation>
</comment>
<comment type="similarity">
    <text evidence="1">Belongs to the methyltransferase superfamily. RsmH family.</text>
</comment>
<name>RSMH_SHEFN</name>
<organism>
    <name type="scientific">Shewanella frigidimarina (strain NCIMB 400)</name>
    <dbReference type="NCBI Taxonomy" id="318167"/>
    <lineage>
        <taxon>Bacteria</taxon>
        <taxon>Pseudomonadati</taxon>
        <taxon>Pseudomonadota</taxon>
        <taxon>Gammaproteobacteria</taxon>
        <taxon>Alteromonadales</taxon>
        <taxon>Shewanellaceae</taxon>
        <taxon>Shewanella</taxon>
    </lineage>
</organism>
<sequence length="313" mass="35015">MSQEFAHLSVLLNETVDGLNIQSDGIYIDGTFGRGGHSRHVLSHLGENGRLIAIDRDPQAIEAAKQFADDPRFQIVHGGFGQLAEYVEELGLTGKINGVLLDLGVSSPQLDDAERGFSFLRDGPLDMRMDNSQGQTAAQWIARAEIEDMAWVFKTYGEEKNSRHIARCIAADREKTPFLRTKDLADLIARITKNKERNKHPATRVFQAIRIYINSELEQIDQALEGALAVLAPQGRLSVISFHSLEDRMVKRFIRRHSQGESVPHGLPIMEAELNKSRKLKAVSKALKPSDAELELNPRARSSVLRVAERLDY</sequence>
<evidence type="ECO:0000255" key="1">
    <source>
        <dbReference type="HAMAP-Rule" id="MF_01007"/>
    </source>
</evidence>